<accession>Q5GWY5</accession>
<feature type="chain" id="PRO_0000298220" description="Cell division topological specificity factor">
    <location>
        <begin position="1"/>
        <end position="85"/>
    </location>
</feature>
<protein>
    <recommendedName>
        <fullName evidence="1">Cell division topological specificity factor</fullName>
    </recommendedName>
</protein>
<dbReference type="EMBL" id="AE013598">
    <property type="protein sequence ID" value="AAW76786.1"/>
    <property type="molecule type" value="Genomic_DNA"/>
</dbReference>
<dbReference type="SMR" id="Q5GWY5"/>
<dbReference type="STRING" id="291331.XOO3532"/>
<dbReference type="KEGG" id="xoo:XOO3532"/>
<dbReference type="HOGENOM" id="CLU_137929_2_1_6"/>
<dbReference type="Proteomes" id="UP000006735">
    <property type="component" value="Chromosome"/>
</dbReference>
<dbReference type="GO" id="GO:0051301">
    <property type="term" value="P:cell division"/>
    <property type="evidence" value="ECO:0007669"/>
    <property type="project" value="UniProtKB-KW"/>
</dbReference>
<dbReference type="GO" id="GO:0032955">
    <property type="term" value="P:regulation of division septum assembly"/>
    <property type="evidence" value="ECO:0007669"/>
    <property type="project" value="InterPro"/>
</dbReference>
<dbReference type="FunFam" id="3.30.1070.10:FF:000001">
    <property type="entry name" value="Cell division topological specificity factor"/>
    <property type="match status" value="1"/>
</dbReference>
<dbReference type="Gene3D" id="3.30.1070.10">
    <property type="entry name" value="Cell division topological specificity factor MinE"/>
    <property type="match status" value="1"/>
</dbReference>
<dbReference type="HAMAP" id="MF_00262">
    <property type="entry name" value="MinE"/>
    <property type="match status" value="1"/>
</dbReference>
<dbReference type="InterPro" id="IPR005527">
    <property type="entry name" value="MinE"/>
</dbReference>
<dbReference type="InterPro" id="IPR036707">
    <property type="entry name" value="MinE_sf"/>
</dbReference>
<dbReference type="NCBIfam" id="TIGR01215">
    <property type="entry name" value="minE"/>
    <property type="match status" value="1"/>
</dbReference>
<dbReference type="NCBIfam" id="NF001422">
    <property type="entry name" value="PRK00296.1"/>
    <property type="match status" value="1"/>
</dbReference>
<dbReference type="Pfam" id="PF03776">
    <property type="entry name" value="MinE"/>
    <property type="match status" value="1"/>
</dbReference>
<dbReference type="SUPFAM" id="SSF55229">
    <property type="entry name" value="Cell division protein MinE topological specificity domain"/>
    <property type="match status" value="1"/>
</dbReference>
<gene>
    <name evidence="1" type="primary">minE</name>
    <name type="ordered locus">XOO3532</name>
</gene>
<comment type="function">
    <text evidence="1">Prevents the cell division inhibition by proteins MinC and MinD at internal division sites while permitting inhibition at polar sites. This ensures cell division at the proper site by restricting the formation of a division septum at the midpoint of the long axis of the cell.</text>
</comment>
<comment type="similarity">
    <text evidence="1">Belongs to the MinE family.</text>
</comment>
<proteinExistence type="inferred from homology"/>
<keyword id="KW-0131">Cell cycle</keyword>
<keyword id="KW-0132">Cell division</keyword>
<keyword id="KW-1185">Reference proteome</keyword>
<sequence>MGLLDFLKSKKNTAETAKNRLQIIIAQERNHRGGPDYLPLMQRELLEVIKKYVNIDADAVRVDLVKDGEHDVLDISVALPEDGDK</sequence>
<organism>
    <name type="scientific">Xanthomonas oryzae pv. oryzae (strain KACC10331 / KXO85)</name>
    <dbReference type="NCBI Taxonomy" id="291331"/>
    <lineage>
        <taxon>Bacteria</taxon>
        <taxon>Pseudomonadati</taxon>
        <taxon>Pseudomonadota</taxon>
        <taxon>Gammaproteobacteria</taxon>
        <taxon>Lysobacterales</taxon>
        <taxon>Lysobacteraceae</taxon>
        <taxon>Xanthomonas</taxon>
    </lineage>
</organism>
<evidence type="ECO:0000255" key="1">
    <source>
        <dbReference type="HAMAP-Rule" id="MF_00262"/>
    </source>
</evidence>
<reference key="1">
    <citation type="journal article" date="2005" name="Nucleic Acids Res.">
        <title>The genome sequence of Xanthomonas oryzae pathovar oryzae KACC10331, the bacterial blight pathogen of rice.</title>
        <authorList>
            <person name="Lee B.-M."/>
            <person name="Park Y.-J."/>
            <person name="Park D.-S."/>
            <person name="Kang H.-W."/>
            <person name="Kim J.-G."/>
            <person name="Song E.-S."/>
            <person name="Park I.-C."/>
            <person name="Yoon U.-H."/>
            <person name="Hahn J.-H."/>
            <person name="Koo B.-S."/>
            <person name="Lee G.-B."/>
            <person name="Kim H."/>
            <person name="Park H.-S."/>
            <person name="Yoon K.-O."/>
            <person name="Kim J.-H."/>
            <person name="Jung C.-H."/>
            <person name="Koh N.-H."/>
            <person name="Seo J.-S."/>
            <person name="Go S.-J."/>
        </authorList>
    </citation>
    <scope>NUCLEOTIDE SEQUENCE [LARGE SCALE GENOMIC DNA]</scope>
    <source>
        <strain>KACC10331 / KXO85</strain>
    </source>
</reference>
<name>MINE_XANOR</name>